<reference key="1">
    <citation type="journal article" date="2009" name="J. Bacteriol.">
        <title>Complete and draft genome sequences of six members of the Aquificales.</title>
        <authorList>
            <person name="Reysenbach A.-L."/>
            <person name="Hamamura N."/>
            <person name="Podar M."/>
            <person name="Griffiths E."/>
            <person name="Ferreira S."/>
            <person name="Hochstein R."/>
            <person name="Heidelberg J."/>
            <person name="Johnson J."/>
            <person name="Mead D."/>
            <person name="Pohorille A."/>
            <person name="Sarmiento M."/>
            <person name="Schweighofer K."/>
            <person name="Seshadri R."/>
            <person name="Voytek M.A."/>
        </authorList>
    </citation>
    <scope>NUCLEOTIDE SEQUENCE [LARGE SCALE GENOMIC DNA]</scope>
    <source>
        <strain>YO3AOP1</strain>
    </source>
</reference>
<accession>B2V6N7</accession>
<keyword id="KW-0066">ATP synthesis</keyword>
<keyword id="KW-0997">Cell inner membrane</keyword>
<keyword id="KW-1003">Cell membrane</keyword>
<keyword id="KW-0139">CF(1)</keyword>
<keyword id="KW-0375">Hydrogen ion transport</keyword>
<keyword id="KW-0406">Ion transport</keyword>
<keyword id="KW-0472">Membrane</keyword>
<keyword id="KW-0813">Transport</keyword>
<organism>
    <name type="scientific">Sulfurihydrogenibium sp. (strain YO3AOP1)</name>
    <dbReference type="NCBI Taxonomy" id="436114"/>
    <lineage>
        <taxon>Bacteria</taxon>
        <taxon>Pseudomonadati</taxon>
        <taxon>Aquificota</taxon>
        <taxon>Aquificia</taxon>
        <taxon>Aquificales</taxon>
        <taxon>Hydrogenothermaceae</taxon>
        <taxon>Sulfurihydrogenibium</taxon>
    </lineage>
</organism>
<comment type="function">
    <text evidence="1">F(1)F(0) ATP synthase produces ATP from ADP in the presence of a proton or sodium gradient. F-type ATPases consist of two structural domains, F(1) containing the extramembraneous catalytic core and F(0) containing the membrane proton channel, linked together by a central stalk and a peripheral stalk. During catalysis, ATP synthesis in the catalytic domain of F(1) is coupled via a rotary mechanism of the central stalk subunits to proton translocation.</text>
</comment>
<comment type="function">
    <text evidence="1">This protein is part of the stalk that links CF(0) to CF(1). It either transmits conformational changes from CF(0) to CF(1) or is implicated in proton conduction.</text>
</comment>
<comment type="subunit">
    <text evidence="1">F-type ATPases have 2 components, F(1) - the catalytic core - and F(0) - the membrane proton channel. F(1) has five subunits: alpha(3), beta(3), gamma(1), delta(1), epsilon(1). F(0) has three main subunits: a(1), b(2) and c(10-14). The alpha and beta chains form an alternating ring which encloses part of the gamma chain. F(1) is attached to F(0) by a central stalk formed by the gamma and epsilon chains, while a peripheral stalk is formed by the delta and b chains.</text>
</comment>
<comment type="subcellular location">
    <subcellularLocation>
        <location evidence="1">Cell inner membrane</location>
        <topology evidence="1">Peripheral membrane protein</topology>
    </subcellularLocation>
</comment>
<comment type="similarity">
    <text evidence="1">Belongs to the ATPase delta chain family.</text>
</comment>
<feature type="chain" id="PRO_0000382153" description="ATP synthase subunit delta">
    <location>
        <begin position="1"/>
        <end position="182"/>
    </location>
</feature>
<gene>
    <name evidence="1" type="primary">atpH</name>
    <name type="ordered locus">SYO3AOP1_1621</name>
</gene>
<evidence type="ECO:0000255" key="1">
    <source>
        <dbReference type="HAMAP-Rule" id="MF_01416"/>
    </source>
</evidence>
<proteinExistence type="inferred from homology"/>
<sequence length="182" mass="20755">MKIDKKYFRKVVNEIIAKTDKSEENLLKISSILDILNKLFKENQTFRNIVLNPKASMEDKEKLMEKVLSALGVDAEISKLLIKIVKDKKANIFKELNKVFKFEVEKFFGTVQGEIISAYKIDEALLNEIKSVIESKIGKKVEFTVKEDNSLIGGAVIKAGTYIIDTSVKSYLKRLESTLSRF</sequence>
<name>ATPD_SULSY</name>
<dbReference type="EMBL" id="CP001080">
    <property type="protein sequence ID" value="ACD67219.1"/>
    <property type="molecule type" value="Genomic_DNA"/>
</dbReference>
<dbReference type="RefSeq" id="WP_012460275.1">
    <property type="nucleotide sequence ID" value="NC_010730.1"/>
</dbReference>
<dbReference type="SMR" id="B2V6N7"/>
<dbReference type="STRING" id="436114.SYO3AOP1_1621"/>
<dbReference type="KEGG" id="sul:SYO3AOP1_1621"/>
<dbReference type="eggNOG" id="COG0712">
    <property type="taxonomic scope" value="Bacteria"/>
</dbReference>
<dbReference type="HOGENOM" id="CLU_085114_1_1_0"/>
<dbReference type="GO" id="GO:0005886">
    <property type="term" value="C:plasma membrane"/>
    <property type="evidence" value="ECO:0007669"/>
    <property type="project" value="UniProtKB-SubCell"/>
</dbReference>
<dbReference type="GO" id="GO:0045259">
    <property type="term" value="C:proton-transporting ATP synthase complex"/>
    <property type="evidence" value="ECO:0007669"/>
    <property type="project" value="UniProtKB-KW"/>
</dbReference>
<dbReference type="GO" id="GO:0046933">
    <property type="term" value="F:proton-transporting ATP synthase activity, rotational mechanism"/>
    <property type="evidence" value="ECO:0007669"/>
    <property type="project" value="UniProtKB-UniRule"/>
</dbReference>
<dbReference type="Gene3D" id="1.10.520.20">
    <property type="entry name" value="N-terminal domain of the delta subunit of the F1F0-ATP synthase"/>
    <property type="match status" value="1"/>
</dbReference>
<dbReference type="HAMAP" id="MF_01416">
    <property type="entry name" value="ATP_synth_delta_bact"/>
    <property type="match status" value="1"/>
</dbReference>
<dbReference type="InterPro" id="IPR026015">
    <property type="entry name" value="ATP_synth_OSCP/delta_N_sf"/>
</dbReference>
<dbReference type="InterPro" id="IPR000711">
    <property type="entry name" value="ATPase_OSCP/dsu"/>
</dbReference>
<dbReference type="NCBIfam" id="TIGR01145">
    <property type="entry name" value="ATP_synt_delta"/>
    <property type="match status" value="1"/>
</dbReference>
<dbReference type="PANTHER" id="PTHR11910">
    <property type="entry name" value="ATP SYNTHASE DELTA CHAIN"/>
    <property type="match status" value="1"/>
</dbReference>
<dbReference type="Pfam" id="PF00213">
    <property type="entry name" value="OSCP"/>
    <property type="match status" value="1"/>
</dbReference>
<dbReference type="PRINTS" id="PR00125">
    <property type="entry name" value="ATPASEDELTA"/>
</dbReference>
<dbReference type="SUPFAM" id="SSF47928">
    <property type="entry name" value="N-terminal domain of the delta subunit of the F1F0-ATP synthase"/>
    <property type="match status" value="1"/>
</dbReference>
<protein>
    <recommendedName>
        <fullName evidence="1">ATP synthase subunit delta</fullName>
    </recommendedName>
    <alternativeName>
        <fullName evidence="1">ATP synthase F(1) sector subunit delta</fullName>
    </alternativeName>
    <alternativeName>
        <fullName evidence="1">F-type ATPase subunit delta</fullName>
        <shortName evidence="1">F-ATPase subunit delta</shortName>
    </alternativeName>
</protein>